<evidence type="ECO:0000250" key="1"/>
<evidence type="ECO:0000305" key="2"/>
<gene>
    <name type="primary">LYS5</name>
    <name type="ordered locus">CAGL0E05104g</name>
</gene>
<proteinExistence type="inferred from homology"/>
<organism>
    <name type="scientific">Candida glabrata (strain ATCC 2001 / BCRC 20586 / JCM 3761 / NBRC 0622 / NRRL Y-65 / CBS 138)</name>
    <name type="common">Yeast</name>
    <name type="synonym">Nakaseomyces glabratus</name>
    <dbReference type="NCBI Taxonomy" id="284593"/>
    <lineage>
        <taxon>Eukaryota</taxon>
        <taxon>Fungi</taxon>
        <taxon>Dikarya</taxon>
        <taxon>Ascomycota</taxon>
        <taxon>Saccharomycotina</taxon>
        <taxon>Saccharomycetes</taxon>
        <taxon>Saccharomycetales</taxon>
        <taxon>Saccharomycetaceae</taxon>
        <taxon>Nakaseomyces</taxon>
    </lineage>
</organism>
<keyword id="KW-1185">Reference proteome</keyword>
<keyword id="KW-0808">Transferase</keyword>
<sequence>MSDWLSLAKSNDPHIVVLTMDVHLSYFRDEYNFEEALRLLPFEWQCRVIQKRAHKDKVTALCNRLLQLYGCRLELNTQAIDFTQGKYGKPFVKNTESFNFSMTNGENFVSIIMANLFQTEVGIDLASINDFTSEGDLKIYEDVLSTEEYEKINNQTNLLDMKRLFAFYWSVKECYTKYLGVGLNGDLKIINVSLFSAPLINEAVSTFKLKDITFHSRWVSDNEILTYCFPAQYDFLKPIHAILNVVSVIEGIKTQFLT</sequence>
<reference key="1">
    <citation type="journal article" date="2004" name="Nature">
        <title>Genome evolution in yeasts.</title>
        <authorList>
            <person name="Dujon B."/>
            <person name="Sherman D."/>
            <person name="Fischer G."/>
            <person name="Durrens P."/>
            <person name="Casaregola S."/>
            <person name="Lafontaine I."/>
            <person name="de Montigny J."/>
            <person name="Marck C."/>
            <person name="Neuveglise C."/>
            <person name="Talla E."/>
            <person name="Goffard N."/>
            <person name="Frangeul L."/>
            <person name="Aigle M."/>
            <person name="Anthouard V."/>
            <person name="Babour A."/>
            <person name="Barbe V."/>
            <person name="Barnay S."/>
            <person name="Blanchin S."/>
            <person name="Beckerich J.-M."/>
            <person name="Beyne E."/>
            <person name="Bleykasten C."/>
            <person name="Boisrame A."/>
            <person name="Boyer J."/>
            <person name="Cattolico L."/>
            <person name="Confanioleri F."/>
            <person name="de Daruvar A."/>
            <person name="Despons L."/>
            <person name="Fabre E."/>
            <person name="Fairhead C."/>
            <person name="Ferry-Dumazet H."/>
            <person name="Groppi A."/>
            <person name="Hantraye F."/>
            <person name="Hennequin C."/>
            <person name="Jauniaux N."/>
            <person name="Joyet P."/>
            <person name="Kachouri R."/>
            <person name="Kerrest A."/>
            <person name="Koszul R."/>
            <person name="Lemaire M."/>
            <person name="Lesur I."/>
            <person name="Ma L."/>
            <person name="Muller H."/>
            <person name="Nicaud J.-M."/>
            <person name="Nikolski M."/>
            <person name="Oztas S."/>
            <person name="Ozier-Kalogeropoulos O."/>
            <person name="Pellenz S."/>
            <person name="Potier S."/>
            <person name="Richard G.-F."/>
            <person name="Straub M.-L."/>
            <person name="Suleau A."/>
            <person name="Swennen D."/>
            <person name="Tekaia F."/>
            <person name="Wesolowski-Louvel M."/>
            <person name="Westhof E."/>
            <person name="Wirth B."/>
            <person name="Zeniou-Meyer M."/>
            <person name="Zivanovic Y."/>
            <person name="Bolotin-Fukuhara M."/>
            <person name="Thierry A."/>
            <person name="Bouchier C."/>
            <person name="Caudron B."/>
            <person name="Scarpelli C."/>
            <person name="Gaillardin C."/>
            <person name="Weissenbach J."/>
            <person name="Wincker P."/>
            <person name="Souciet J.-L."/>
        </authorList>
    </citation>
    <scope>NUCLEOTIDE SEQUENCE [LARGE SCALE GENOMIC DNA]</scope>
    <source>
        <strain>ATCC 2001 / BCRC 20586 / JCM 3761 / NBRC 0622 / NRRL Y-65 / CBS 138</strain>
    </source>
</reference>
<accession>Q6FV34</accession>
<name>LYS5_CANGA</name>
<protein>
    <recommendedName>
        <fullName>L-aminoadipate-semialdehyde dehydrogenase-phosphopantetheinyl transferase</fullName>
        <shortName>AASD-PPT</shortName>
        <ecNumber>2.7.8.7</ecNumber>
    </recommendedName>
</protein>
<comment type="function">
    <text evidence="1">Catalyzes the transfer of a 4'-phosphopantetheine moiety from coenzyme A to a serine residue of acceptor proteins, such as alpha-aminoadipate reductase. Necessary for alpha-aminoadipate reductase activity (By similarity).</text>
</comment>
<comment type="catalytic activity">
    <reaction>
        <text>apo-[ACP] + CoA = holo-[ACP] + adenosine 3',5'-bisphosphate + H(+)</text>
        <dbReference type="Rhea" id="RHEA:12068"/>
        <dbReference type="Rhea" id="RHEA-COMP:9685"/>
        <dbReference type="Rhea" id="RHEA-COMP:9690"/>
        <dbReference type="ChEBI" id="CHEBI:15378"/>
        <dbReference type="ChEBI" id="CHEBI:29999"/>
        <dbReference type="ChEBI" id="CHEBI:57287"/>
        <dbReference type="ChEBI" id="CHEBI:58343"/>
        <dbReference type="ChEBI" id="CHEBI:64479"/>
        <dbReference type="EC" id="2.7.8.7"/>
    </reaction>
</comment>
<comment type="similarity">
    <text evidence="2">Belongs to the P-Pant transferase superfamily. AcpS family.</text>
</comment>
<feature type="chain" id="PRO_0000175741" description="L-aminoadipate-semialdehyde dehydrogenase-phosphopantetheinyl transferase">
    <location>
        <begin position="1"/>
        <end position="258"/>
    </location>
</feature>
<dbReference type="EC" id="2.7.8.7"/>
<dbReference type="EMBL" id="CR380951">
    <property type="protein sequence ID" value="CAG58829.1"/>
    <property type="molecule type" value="Genomic_DNA"/>
</dbReference>
<dbReference type="RefSeq" id="XP_445910.1">
    <property type="nucleotide sequence ID" value="XM_445910.1"/>
</dbReference>
<dbReference type="SMR" id="Q6FV34"/>
<dbReference type="FunCoup" id="Q6FV34">
    <property type="interactions" value="43"/>
</dbReference>
<dbReference type="STRING" id="284593.Q6FV34"/>
<dbReference type="EnsemblFungi" id="CAGL0E05104g-T">
    <property type="protein sequence ID" value="CAGL0E05104g-T-p1"/>
    <property type="gene ID" value="CAGL0E05104g"/>
</dbReference>
<dbReference type="KEGG" id="cgr:2887362"/>
<dbReference type="CGD" id="CAL0128802">
    <property type="gene designation" value="CAGL0E05104g"/>
</dbReference>
<dbReference type="VEuPathDB" id="FungiDB:CAGL0E05104g"/>
<dbReference type="eggNOG" id="KOG0945">
    <property type="taxonomic scope" value="Eukaryota"/>
</dbReference>
<dbReference type="HOGENOM" id="CLU_075352_0_0_1"/>
<dbReference type="InParanoid" id="Q6FV34"/>
<dbReference type="OMA" id="PWAGIFV"/>
<dbReference type="Proteomes" id="UP000002428">
    <property type="component" value="Chromosome E"/>
</dbReference>
<dbReference type="GO" id="GO:0005829">
    <property type="term" value="C:cytosol"/>
    <property type="evidence" value="ECO:0007669"/>
    <property type="project" value="TreeGrafter"/>
</dbReference>
<dbReference type="GO" id="GO:0008897">
    <property type="term" value="F:holo-[acyl-carrier-protein] synthase activity"/>
    <property type="evidence" value="ECO:0007669"/>
    <property type="project" value="UniProtKB-EC"/>
</dbReference>
<dbReference type="GO" id="GO:0000287">
    <property type="term" value="F:magnesium ion binding"/>
    <property type="evidence" value="ECO:0007669"/>
    <property type="project" value="InterPro"/>
</dbReference>
<dbReference type="GO" id="GO:0019878">
    <property type="term" value="P:lysine biosynthetic process via aminoadipic acid"/>
    <property type="evidence" value="ECO:0007669"/>
    <property type="project" value="TreeGrafter"/>
</dbReference>
<dbReference type="Gene3D" id="3.90.470.20">
    <property type="entry name" value="4'-phosphopantetheinyl transferase domain"/>
    <property type="match status" value="2"/>
</dbReference>
<dbReference type="InterPro" id="IPR008278">
    <property type="entry name" value="4-PPantetheinyl_Trfase_dom"/>
</dbReference>
<dbReference type="InterPro" id="IPR037143">
    <property type="entry name" value="4-PPantetheinyl_Trfase_dom_sf"/>
</dbReference>
<dbReference type="InterPro" id="IPR050559">
    <property type="entry name" value="P-Pant_transferase_sf"/>
</dbReference>
<dbReference type="PANTHER" id="PTHR12215:SF10">
    <property type="entry name" value="L-AMINOADIPATE-SEMIALDEHYDE DEHYDROGENASE-PHOSPHOPANTETHEINYL TRANSFERASE"/>
    <property type="match status" value="1"/>
</dbReference>
<dbReference type="PANTHER" id="PTHR12215">
    <property type="entry name" value="PHOSPHOPANTETHEINE TRANSFERASE"/>
    <property type="match status" value="1"/>
</dbReference>
<dbReference type="Pfam" id="PF01648">
    <property type="entry name" value="ACPS"/>
    <property type="match status" value="1"/>
</dbReference>
<dbReference type="SUPFAM" id="SSF56214">
    <property type="entry name" value="4'-phosphopantetheinyl transferase"/>
    <property type="match status" value="2"/>
</dbReference>